<keyword id="KW-0032">Aminotransferase</keyword>
<keyword id="KW-0663">Pyridoxal phosphate</keyword>
<keyword id="KW-0808">Transferase</keyword>
<sequence>MTARLRPELADIPAYTPGKTVPGAIKIASNETVHGPLPSVRAAIEKATDQLNRYPDNGYLELREHLASHLDKNLGAGAFTPEQIAVGCGSVSLCQQLIQITSSVGDEVIFAWRSFEIYPLQVRTAGATPVQVPLRDHTHDLDAMLAAITDRTRLIFVCNPNNPTSTVVDPAALKRFVEAVPPHILVVIDEAYVEYIRGDQVPDSFGLVRAHPNVVVLRTFSKAYGLAGLRIGYAVADADIVTALGKVYVPFSATSISQAAAIASIDAADELLARTDQVVAERDRVTAALREAGFTLPPSQSNFVWLPLAERTLDFVRRAAENRLVVRPYGEDGVRVTIAAPHENDAFLEFARNWIGQP</sequence>
<gene>
    <name evidence="1" type="primary">pat</name>
    <name type="ordered locus">Mkms_5070</name>
</gene>
<accession>A1UN51</accession>
<feature type="chain" id="PRO_1000024498" description="Aromatic amino acid aminotransferase">
    <location>
        <begin position="1"/>
        <end position="358"/>
    </location>
</feature>
<feature type="modified residue" description="N6-(pyridoxal phosphate)lysine" evidence="1">
    <location>
        <position position="222"/>
    </location>
</feature>
<protein>
    <recommendedName>
        <fullName evidence="1">Aromatic amino acid aminotransferase</fullName>
        <shortName evidence="1">ArAT</shortName>
        <ecNumber evidence="1">2.6.1.57</ecNumber>
    </recommendedName>
</protein>
<reference key="1">
    <citation type="submission" date="2006-12" db="EMBL/GenBank/DDBJ databases">
        <title>Complete sequence of chromosome of Mycobacterium sp. KMS.</title>
        <authorList>
            <consortium name="US DOE Joint Genome Institute"/>
            <person name="Copeland A."/>
            <person name="Lucas S."/>
            <person name="Lapidus A."/>
            <person name="Barry K."/>
            <person name="Detter J.C."/>
            <person name="Glavina del Rio T."/>
            <person name="Hammon N."/>
            <person name="Israni S."/>
            <person name="Dalin E."/>
            <person name="Tice H."/>
            <person name="Pitluck S."/>
            <person name="Kiss H."/>
            <person name="Brettin T."/>
            <person name="Bruce D."/>
            <person name="Han C."/>
            <person name="Tapia R."/>
            <person name="Gilna P."/>
            <person name="Schmutz J."/>
            <person name="Larimer F."/>
            <person name="Land M."/>
            <person name="Hauser L."/>
            <person name="Kyrpides N."/>
            <person name="Mikhailova N."/>
            <person name="Miller C.D."/>
            <person name="Richardson P."/>
        </authorList>
    </citation>
    <scope>NUCLEOTIDE SEQUENCE [LARGE SCALE GENOMIC DNA]</scope>
    <source>
        <strain>KMS</strain>
    </source>
</reference>
<dbReference type="EC" id="2.6.1.57" evidence="1"/>
<dbReference type="EMBL" id="CP000518">
    <property type="protein sequence ID" value="ABL94259.1"/>
    <property type="molecule type" value="Genomic_DNA"/>
</dbReference>
<dbReference type="SMR" id="A1UN51"/>
<dbReference type="STRING" id="189918.Mkms_5070"/>
<dbReference type="KEGG" id="mkm:Mkms_5070"/>
<dbReference type="HOGENOM" id="CLU_017584_3_3_11"/>
<dbReference type="OrthoDB" id="9809616at2"/>
<dbReference type="GO" id="GO:0008793">
    <property type="term" value="F:aromatic-amino-acid transaminase activity"/>
    <property type="evidence" value="ECO:0007669"/>
    <property type="project" value="UniProtKB-UniRule"/>
</dbReference>
<dbReference type="GO" id="GO:0004400">
    <property type="term" value="F:histidinol-phosphate transaminase activity"/>
    <property type="evidence" value="ECO:0007669"/>
    <property type="project" value="InterPro"/>
</dbReference>
<dbReference type="GO" id="GO:0030170">
    <property type="term" value="F:pyridoxal phosphate binding"/>
    <property type="evidence" value="ECO:0007669"/>
    <property type="project" value="UniProtKB-UniRule"/>
</dbReference>
<dbReference type="GO" id="GO:0000105">
    <property type="term" value="P:L-histidine biosynthetic process"/>
    <property type="evidence" value="ECO:0007669"/>
    <property type="project" value="InterPro"/>
</dbReference>
<dbReference type="CDD" id="cd00609">
    <property type="entry name" value="AAT_like"/>
    <property type="match status" value="1"/>
</dbReference>
<dbReference type="Gene3D" id="3.90.1150.10">
    <property type="entry name" value="Aspartate Aminotransferase, domain 1"/>
    <property type="match status" value="1"/>
</dbReference>
<dbReference type="Gene3D" id="3.40.640.10">
    <property type="entry name" value="Type I PLP-dependent aspartate aminotransferase-like (Major domain)"/>
    <property type="match status" value="1"/>
</dbReference>
<dbReference type="HAMAP" id="MF_01023">
    <property type="entry name" value="HisC_aminotrans_2"/>
    <property type="match status" value="1"/>
</dbReference>
<dbReference type="HAMAP" id="MF_01513">
    <property type="entry name" value="Phe_aminotrans_2"/>
    <property type="match status" value="1"/>
</dbReference>
<dbReference type="InterPro" id="IPR001917">
    <property type="entry name" value="Aminotrans_II_pyridoxalP_BS"/>
</dbReference>
<dbReference type="InterPro" id="IPR004839">
    <property type="entry name" value="Aminotransferase_I/II_large"/>
</dbReference>
<dbReference type="InterPro" id="IPR024892">
    <property type="entry name" value="ArAT"/>
</dbReference>
<dbReference type="InterPro" id="IPR005861">
    <property type="entry name" value="HisP_aminotrans"/>
</dbReference>
<dbReference type="InterPro" id="IPR050106">
    <property type="entry name" value="HistidinolP_aminotransfase"/>
</dbReference>
<dbReference type="InterPro" id="IPR015424">
    <property type="entry name" value="PyrdxlP-dep_Trfase"/>
</dbReference>
<dbReference type="InterPro" id="IPR015421">
    <property type="entry name" value="PyrdxlP-dep_Trfase_major"/>
</dbReference>
<dbReference type="InterPro" id="IPR015422">
    <property type="entry name" value="PyrdxlP-dep_Trfase_small"/>
</dbReference>
<dbReference type="NCBIfam" id="TIGR01141">
    <property type="entry name" value="hisC"/>
    <property type="match status" value="1"/>
</dbReference>
<dbReference type="NCBIfam" id="NF002878">
    <property type="entry name" value="PRK03321.1"/>
    <property type="match status" value="1"/>
</dbReference>
<dbReference type="PANTHER" id="PTHR43643:SF3">
    <property type="entry name" value="HISTIDINOL-PHOSPHATE AMINOTRANSFERASE"/>
    <property type="match status" value="1"/>
</dbReference>
<dbReference type="PANTHER" id="PTHR43643">
    <property type="entry name" value="HISTIDINOL-PHOSPHATE AMINOTRANSFERASE 2"/>
    <property type="match status" value="1"/>
</dbReference>
<dbReference type="Pfam" id="PF00155">
    <property type="entry name" value="Aminotran_1_2"/>
    <property type="match status" value="1"/>
</dbReference>
<dbReference type="SUPFAM" id="SSF53383">
    <property type="entry name" value="PLP-dependent transferases"/>
    <property type="match status" value="1"/>
</dbReference>
<dbReference type="PROSITE" id="PS00599">
    <property type="entry name" value="AA_TRANSFER_CLASS_2"/>
    <property type="match status" value="1"/>
</dbReference>
<proteinExistence type="inferred from homology"/>
<comment type="function">
    <text evidence="1">Aminotransferase that catalyzes the conversion of aromatic amino acids and 2-oxoglutarate into corresponding aromatic oxo acids and L-glutamate.</text>
</comment>
<comment type="catalytic activity">
    <reaction evidence="1">
        <text>an aromatic L-alpha-amino acid + 2-oxoglutarate = an aromatic oxo-acid + L-glutamate</text>
        <dbReference type="Rhea" id="RHEA:17533"/>
        <dbReference type="ChEBI" id="CHEBI:16810"/>
        <dbReference type="ChEBI" id="CHEBI:29985"/>
        <dbReference type="ChEBI" id="CHEBI:73309"/>
        <dbReference type="ChEBI" id="CHEBI:84824"/>
        <dbReference type="EC" id="2.6.1.57"/>
    </reaction>
</comment>
<comment type="cofactor">
    <cofactor evidence="1">
        <name>pyridoxal 5'-phosphate</name>
        <dbReference type="ChEBI" id="CHEBI:597326"/>
    </cofactor>
</comment>
<comment type="subunit">
    <text evidence="1">Homodimer.</text>
</comment>
<comment type="similarity">
    <text evidence="1">Belongs to the class-II pyridoxal-phosphate-dependent aminotransferase family.</text>
</comment>
<evidence type="ECO:0000255" key="1">
    <source>
        <dbReference type="HAMAP-Rule" id="MF_01513"/>
    </source>
</evidence>
<name>PATR_MYCSK</name>
<organism>
    <name type="scientific">Mycobacterium sp. (strain KMS)</name>
    <dbReference type="NCBI Taxonomy" id="189918"/>
    <lineage>
        <taxon>Bacteria</taxon>
        <taxon>Bacillati</taxon>
        <taxon>Actinomycetota</taxon>
        <taxon>Actinomycetes</taxon>
        <taxon>Mycobacteriales</taxon>
        <taxon>Mycobacteriaceae</taxon>
        <taxon>Mycobacterium</taxon>
    </lineage>
</organism>